<proteinExistence type="predicted"/>
<sequence>MDCMKKLKVEGTLELNLDDKDVRKNLKSLEKIKSKLEIESNINAVIKQLDELKNVKSEVEFKSNINMIIRELEEIEADASKMNINFDYDLSKLKSELEQLKNTKIDIKTNTDQILKQINKIKSELSEKQTIRAKVEVDRTEWDKLKKEWSEKYHINAIADVASVGTAYMGISDAEKYNELMTILRERGLTKDQAERLIQIGLYNGYSLDEIRDGIVYSNEAVLKLAASNDKYAAQILAAMAMAERGGEPGADDIARMISALTAMGKSNEEIMKMVNAEVLEMKQGHTEVAEAIREFSITMGDTLDPEKFASILIQAQAAGAQDVGQLAEAINDLALNSRQMGFDVEKALREIQKTKDDKTLAELAKKYGLTYEQIVKIHDYLQRVDLDKGLPDNTNELDRLISINKDQKGILETIKQDIEGWLAGHGYLQYGAELGVGLGGLGKILEIAIGAAIGSALKDAFGEIKSTLFGKISLDNLKLPELSKIKLPVDLEIPKIPKISMPKIKLPVDLKLPKIPKINIPKINLPNVSGLSNAFKGLGEAVRFAGRAFGFLSVVVEPVKQLLEGDIQGAIEHLKVGLIELAAWPVALGEALAAVTLAVGDFLGLFDLDGDSPLSAARAGILTLLAAFESIYSFITGDWSVVQNTLQEAFEELGMKEDEARQAAENLAQQWQQLPQQILDAFNGFVDNIKQTFDEWWNGLNEWWSQKIEEAKNWGSDLIQNIIDGIKEKFSELENAVSQAAGIISSYLHHTTPDVGPLKDDDKWGIHFMENIIGGIRKEIPNLKKTIDYTAKLMSSANPKNWKIQQVGITHSTSYSYGDIHINVVGNSFNEHQLAQKIALILKKQRFR</sequence>
<accession>Q57789</accession>
<name>Y343_METJA</name>
<gene>
    <name type="ordered locus">MJ0343</name>
</gene>
<comment type="subcellular location">
    <subcellularLocation>
        <location evidence="2">Cell membrane</location>
        <topology evidence="2">Multi-pass membrane protein</topology>
    </subcellularLocation>
</comment>
<evidence type="ECO:0000255" key="1"/>
<evidence type="ECO:0000305" key="2"/>
<reference key="1">
    <citation type="journal article" date="1996" name="Science">
        <title>Complete genome sequence of the methanogenic archaeon, Methanococcus jannaschii.</title>
        <authorList>
            <person name="Bult C.J."/>
            <person name="White O."/>
            <person name="Olsen G.J."/>
            <person name="Zhou L."/>
            <person name="Fleischmann R.D."/>
            <person name="Sutton G.G."/>
            <person name="Blake J.A."/>
            <person name="FitzGerald L.M."/>
            <person name="Clayton R.A."/>
            <person name="Gocayne J.D."/>
            <person name="Kerlavage A.R."/>
            <person name="Dougherty B.A."/>
            <person name="Tomb J.-F."/>
            <person name="Adams M.D."/>
            <person name="Reich C.I."/>
            <person name="Overbeek R."/>
            <person name="Kirkness E.F."/>
            <person name="Weinstock K.G."/>
            <person name="Merrick J.M."/>
            <person name="Glodek A."/>
            <person name="Scott J.L."/>
            <person name="Geoghagen N.S.M."/>
            <person name="Weidman J.F."/>
            <person name="Fuhrmann J.L."/>
            <person name="Nguyen D."/>
            <person name="Utterback T.R."/>
            <person name="Kelley J.M."/>
            <person name="Peterson J.D."/>
            <person name="Sadow P.W."/>
            <person name="Hanna M.C."/>
            <person name="Cotton M.D."/>
            <person name="Roberts K.M."/>
            <person name="Hurst M.A."/>
            <person name="Kaine B.P."/>
            <person name="Borodovsky M."/>
            <person name="Klenk H.-P."/>
            <person name="Fraser C.M."/>
            <person name="Smith H.O."/>
            <person name="Woese C.R."/>
            <person name="Venter J.C."/>
        </authorList>
    </citation>
    <scope>NUCLEOTIDE SEQUENCE [LARGE SCALE GENOMIC DNA]</scope>
    <source>
        <strain>ATCC 43067 / DSM 2661 / JAL-1 / JCM 10045 / NBRC 100440</strain>
    </source>
</reference>
<keyword id="KW-1003">Cell membrane</keyword>
<keyword id="KW-0472">Membrane</keyword>
<keyword id="KW-1185">Reference proteome</keyword>
<keyword id="KW-0812">Transmembrane</keyword>
<keyword id="KW-1133">Transmembrane helix</keyword>
<dbReference type="EMBL" id="L77117">
    <property type="protein sequence ID" value="AAB98333.1"/>
    <property type="molecule type" value="Genomic_DNA"/>
</dbReference>
<dbReference type="PIR" id="G64342">
    <property type="entry name" value="G64342"/>
</dbReference>
<dbReference type="SMR" id="Q57789"/>
<dbReference type="STRING" id="243232.MJ_0343"/>
<dbReference type="PaxDb" id="243232-MJ_0343"/>
<dbReference type="EnsemblBacteria" id="AAB98333">
    <property type="protein sequence ID" value="AAB98333"/>
    <property type="gene ID" value="MJ_0343"/>
</dbReference>
<dbReference type="KEGG" id="mja:MJ_0343"/>
<dbReference type="eggNOG" id="arCOG11380">
    <property type="taxonomic scope" value="Archaea"/>
</dbReference>
<dbReference type="HOGENOM" id="CLU_335763_0_0_2"/>
<dbReference type="InParanoid" id="Q57789"/>
<dbReference type="OrthoDB" id="375590at2157"/>
<dbReference type="Proteomes" id="UP000000805">
    <property type="component" value="Chromosome"/>
</dbReference>
<dbReference type="GO" id="GO:0005886">
    <property type="term" value="C:plasma membrane"/>
    <property type="evidence" value="ECO:0007669"/>
    <property type="project" value="UniProtKB-SubCell"/>
</dbReference>
<dbReference type="Gene3D" id="1.20.120.20">
    <property type="entry name" value="Apolipoprotein"/>
    <property type="match status" value="1"/>
</dbReference>
<organism>
    <name type="scientific">Methanocaldococcus jannaschii (strain ATCC 43067 / DSM 2661 / JAL-1 / JCM 10045 / NBRC 100440)</name>
    <name type="common">Methanococcus jannaschii</name>
    <dbReference type="NCBI Taxonomy" id="243232"/>
    <lineage>
        <taxon>Archaea</taxon>
        <taxon>Methanobacteriati</taxon>
        <taxon>Methanobacteriota</taxon>
        <taxon>Methanomada group</taxon>
        <taxon>Methanococci</taxon>
        <taxon>Methanococcales</taxon>
        <taxon>Methanocaldococcaceae</taxon>
        <taxon>Methanocaldococcus</taxon>
    </lineage>
</organism>
<feature type="chain" id="PRO_0000106813" description="Uncharacterized protein MJ0343">
    <location>
        <begin position="1"/>
        <end position="849"/>
    </location>
</feature>
<feature type="transmembrane region" description="Helical" evidence="1">
    <location>
        <begin position="587"/>
        <end position="607"/>
    </location>
</feature>
<feature type="transmembrane region" description="Helical" evidence="1">
    <location>
        <begin position="620"/>
        <end position="640"/>
    </location>
</feature>
<protein>
    <recommendedName>
        <fullName>Uncharacterized protein MJ0343</fullName>
    </recommendedName>
</protein>